<protein>
    <recommendedName>
        <fullName evidence="1">Large ribosomal subunit protein uL24</fullName>
    </recommendedName>
    <alternativeName>
        <fullName evidence="2">50S ribosomal protein L24</fullName>
    </alternativeName>
</protein>
<accession>B8IYI3</accession>
<reference key="1">
    <citation type="submission" date="2009-01" db="EMBL/GenBank/DDBJ databases">
        <title>Complete sequence of Desulfovibrio desulfuricans subsp. desulfuricans str. ATCC 27774.</title>
        <authorList>
            <consortium name="US DOE Joint Genome Institute"/>
            <person name="Lucas S."/>
            <person name="Copeland A."/>
            <person name="Lapidus A."/>
            <person name="Glavina del Rio T."/>
            <person name="Tice H."/>
            <person name="Bruce D."/>
            <person name="Goodwin L."/>
            <person name="Pitluck S."/>
            <person name="Sims D."/>
            <person name="Lu M."/>
            <person name="Kiss H."/>
            <person name="Meineke L."/>
            <person name="Brettin T."/>
            <person name="Detter J.C."/>
            <person name="Han C."/>
            <person name="Larimer F."/>
            <person name="Land M."/>
            <person name="Hauser L."/>
            <person name="Kyrpides N."/>
            <person name="Ovchinnikova G."/>
            <person name="Hazen T.C."/>
        </authorList>
    </citation>
    <scope>NUCLEOTIDE SEQUENCE [LARGE SCALE GENOMIC DNA]</scope>
    <source>
        <strain>ATCC 27774 / DSM 6949 / MB</strain>
    </source>
</reference>
<keyword id="KW-0687">Ribonucleoprotein</keyword>
<keyword id="KW-0689">Ribosomal protein</keyword>
<keyword id="KW-0694">RNA-binding</keyword>
<keyword id="KW-0699">rRNA-binding</keyword>
<sequence>MKMYRIRKDDKVMVIAGKDAGKIGKVLKILRKKDRVLVEKTNMVKRHMRPNPYAQQPGGIVEKEMPIHVSNVMVVCSACGKATRVGYKTIESEGKEKKVRFCKKCNEVME</sequence>
<gene>
    <name evidence="1" type="primary">rplX</name>
    <name type="ordered locus">Ddes_0671</name>
</gene>
<proteinExistence type="inferred from homology"/>
<evidence type="ECO:0000255" key="1">
    <source>
        <dbReference type="HAMAP-Rule" id="MF_01326"/>
    </source>
</evidence>
<evidence type="ECO:0000305" key="2"/>
<name>RL24_DESDA</name>
<dbReference type="EMBL" id="CP001358">
    <property type="protein sequence ID" value="ACL48579.1"/>
    <property type="molecule type" value="Genomic_DNA"/>
</dbReference>
<dbReference type="SMR" id="B8IYI3"/>
<dbReference type="STRING" id="525146.Ddes_0671"/>
<dbReference type="KEGG" id="dds:Ddes_0671"/>
<dbReference type="eggNOG" id="COG0198">
    <property type="taxonomic scope" value="Bacteria"/>
</dbReference>
<dbReference type="HOGENOM" id="CLU_093315_2_3_7"/>
<dbReference type="GO" id="GO:1990904">
    <property type="term" value="C:ribonucleoprotein complex"/>
    <property type="evidence" value="ECO:0007669"/>
    <property type="project" value="UniProtKB-KW"/>
</dbReference>
<dbReference type="GO" id="GO:0005840">
    <property type="term" value="C:ribosome"/>
    <property type="evidence" value="ECO:0007669"/>
    <property type="project" value="UniProtKB-KW"/>
</dbReference>
<dbReference type="GO" id="GO:0019843">
    <property type="term" value="F:rRNA binding"/>
    <property type="evidence" value="ECO:0007669"/>
    <property type="project" value="UniProtKB-UniRule"/>
</dbReference>
<dbReference type="GO" id="GO:0003735">
    <property type="term" value="F:structural constituent of ribosome"/>
    <property type="evidence" value="ECO:0007669"/>
    <property type="project" value="InterPro"/>
</dbReference>
<dbReference type="GO" id="GO:0006412">
    <property type="term" value="P:translation"/>
    <property type="evidence" value="ECO:0007669"/>
    <property type="project" value="UniProtKB-UniRule"/>
</dbReference>
<dbReference type="CDD" id="cd06089">
    <property type="entry name" value="KOW_RPL26"/>
    <property type="match status" value="1"/>
</dbReference>
<dbReference type="FunFam" id="2.30.30.30:FF:000004">
    <property type="entry name" value="50S ribosomal protein L24"/>
    <property type="match status" value="1"/>
</dbReference>
<dbReference type="Gene3D" id="2.30.30.30">
    <property type="match status" value="1"/>
</dbReference>
<dbReference type="HAMAP" id="MF_01326_B">
    <property type="entry name" value="Ribosomal_uL24_B"/>
    <property type="match status" value="1"/>
</dbReference>
<dbReference type="InterPro" id="IPR005824">
    <property type="entry name" value="KOW"/>
</dbReference>
<dbReference type="InterPro" id="IPR014722">
    <property type="entry name" value="Rib_uL2_dom2"/>
</dbReference>
<dbReference type="InterPro" id="IPR003256">
    <property type="entry name" value="Ribosomal_uL24"/>
</dbReference>
<dbReference type="InterPro" id="IPR005825">
    <property type="entry name" value="Ribosomal_uL24_CS"/>
</dbReference>
<dbReference type="InterPro" id="IPR041988">
    <property type="entry name" value="Ribosomal_uL24_KOW"/>
</dbReference>
<dbReference type="InterPro" id="IPR008991">
    <property type="entry name" value="Translation_prot_SH3-like_sf"/>
</dbReference>
<dbReference type="NCBIfam" id="TIGR01079">
    <property type="entry name" value="rplX_bact"/>
    <property type="match status" value="1"/>
</dbReference>
<dbReference type="PANTHER" id="PTHR12903">
    <property type="entry name" value="MITOCHONDRIAL RIBOSOMAL PROTEIN L24"/>
    <property type="match status" value="1"/>
</dbReference>
<dbReference type="Pfam" id="PF00467">
    <property type="entry name" value="KOW"/>
    <property type="match status" value="1"/>
</dbReference>
<dbReference type="Pfam" id="PF17136">
    <property type="entry name" value="ribosomal_L24"/>
    <property type="match status" value="1"/>
</dbReference>
<dbReference type="SMART" id="SM00739">
    <property type="entry name" value="KOW"/>
    <property type="match status" value="1"/>
</dbReference>
<dbReference type="SUPFAM" id="SSF50104">
    <property type="entry name" value="Translation proteins SH3-like domain"/>
    <property type="match status" value="1"/>
</dbReference>
<dbReference type="PROSITE" id="PS01108">
    <property type="entry name" value="RIBOSOMAL_L24"/>
    <property type="match status" value="1"/>
</dbReference>
<comment type="function">
    <text evidence="1">One of two assembly initiator proteins, it binds directly to the 5'-end of the 23S rRNA, where it nucleates assembly of the 50S subunit.</text>
</comment>
<comment type="function">
    <text evidence="1">One of the proteins that surrounds the polypeptide exit tunnel on the outside of the subunit.</text>
</comment>
<comment type="subunit">
    <text evidence="1">Part of the 50S ribosomal subunit.</text>
</comment>
<comment type="similarity">
    <text evidence="1">Belongs to the universal ribosomal protein uL24 family.</text>
</comment>
<organism>
    <name type="scientific">Desulfovibrio desulfuricans (strain ATCC 27774 / DSM 6949 / MB)</name>
    <dbReference type="NCBI Taxonomy" id="525146"/>
    <lineage>
        <taxon>Bacteria</taxon>
        <taxon>Pseudomonadati</taxon>
        <taxon>Thermodesulfobacteriota</taxon>
        <taxon>Desulfovibrionia</taxon>
        <taxon>Desulfovibrionales</taxon>
        <taxon>Desulfovibrionaceae</taxon>
        <taxon>Desulfovibrio</taxon>
    </lineage>
</organism>
<feature type="chain" id="PRO_1000165939" description="Large ribosomal subunit protein uL24">
    <location>
        <begin position="1"/>
        <end position="110"/>
    </location>
</feature>